<evidence type="ECO:0000250" key="1">
    <source>
        <dbReference type="UniProtKB" id="Q9S7P8"/>
    </source>
</evidence>
<evidence type="ECO:0000256" key="2">
    <source>
        <dbReference type="SAM" id="MobiDB-lite"/>
    </source>
</evidence>
<evidence type="ECO:0000269" key="3">
    <source>
    </source>
</evidence>
<evidence type="ECO:0000305" key="4"/>
<reference key="1">
    <citation type="journal article" date="2000" name="Nature">
        <title>Sequence and analysis of chromosome 5 of the plant Arabidopsis thaliana.</title>
        <authorList>
            <person name="Tabata S."/>
            <person name="Kaneko T."/>
            <person name="Nakamura Y."/>
            <person name="Kotani H."/>
            <person name="Kato T."/>
            <person name="Asamizu E."/>
            <person name="Miyajima N."/>
            <person name="Sasamoto S."/>
            <person name="Kimura T."/>
            <person name="Hosouchi T."/>
            <person name="Kawashima K."/>
            <person name="Kohara M."/>
            <person name="Matsumoto M."/>
            <person name="Matsuno A."/>
            <person name="Muraki A."/>
            <person name="Nakayama S."/>
            <person name="Nakazaki N."/>
            <person name="Naruo K."/>
            <person name="Okumura S."/>
            <person name="Shinpo S."/>
            <person name="Takeuchi C."/>
            <person name="Wada T."/>
            <person name="Watanabe A."/>
            <person name="Yamada M."/>
            <person name="Yasuda M."/>
            <person name="Sato S."/>
            <person name="de la Bastide M."/>
            <person name="Huang E."/>
            <person name="Spiegel L."/>
            <person name="Gnoj L."/>
            <person name="O'Shaughnessy A."/>
            <person name="Preston R."/>
            <person name="Habermann K."/>
            <person name="Murray J."/>
            <person name="Johnson D."/>
            <person name="Rohlfing T."/>
            <person name="Nelson J."/>
            <person name="Stoneking T."/>
            <person name="Pepin K."/>
            <person name="Spieth J."/>
            <person name="Sekhon M."/>
            <person name="Armstrong J."/>
            <person name="Becker M."/>
            <person name="Belter E."/>
            <person name="Cordum H."/>
            <person name="Cordes M."/>
            <person name="Courtney L."/>
            <person name="Courtney W."/>
            <person name="Dante M."/>
            <person name="Du H."/>
            <person name="Edwards J."/>
            <person name="Fryman J."/>
            <person name="Haakensen B."/>
            <person name="Lamar E."/>
            <person name="Latreille P."/>
            <person name="Leonard S."/>
            <person name="Meyer R."/>
            <person name="Mulvaney E."/>
            <person name="Ozersky P."/>
            <person name="Riley A."/>
            <person name="Strowmatt C."/>
            <person name="Wagner-McPherson C."/>
            <person name="Wollam A."/>
            <person name="Yoakum M."/>
            <person name="Bell M."/>
            <person name="Dedhia N."/>
            <person name="Parnell L."/>
            <person name="Shah R."/>
            <person name="Rodriguez M."/>
            <person name="Hoon See L."/>
            <person name="Vil D."/>
            <person name="Baker J."/>
            <person name="Kirchoff K."/>
            <person name="Toth K."/>
            <person name="King L."/>
            <person name="Bahret A."/>
            <person name="Miller B."/>
            <person name="Marra M.A."/>
            <person name="Martienssen R."/>
            <person name="McCombie W.R."/>
            <person name="Wilson R.K."/>
            <person name="Murphy G."/>
            <person name="Bancroft I."/>
            <person name="Volckaert G."/>
            <person name="Wambutt R."/>
            <person name="Duesterhoeft A."/>
            <person name="Stiekema W."/>
            <person name="Pohl T."/>
            <person name="Entian K.-D."/>
            <person name="Terryn N."/>
            <person name="Hartley N."/>
            <person name="Bent E."/>
            <person name="Johnson S."/>
            <person name="Langham S.-A."/>
            <person name="McCullagh B."/>
            <person name="Robben J."/>
            <person name="Grymonprez B."/>
            <person name="Zimmermann W."/>
            <person name="Ramsperger U."/>
            <person name="Wedler H."/>
            <person name="Balke K."/>
            <person name="Wedler E."/>
            <person name="Peters S."/>
            <person name="van Staveren M."/>
            <person name="Dirkse W."/>
            <person name="Mooijman P."/>
            <person name="Klein Lankhorst R."/>
            <person name="Weitzenegger T."/>
            <person name="Bothe G."/>
            <person name="Rose M."/>
            <person name="Hauf J."/>
            <person name="Berneiser S."/>
            <person name="Hempel S."/>
            <person name="Feldpausch M."/>
            <person name="Lamberth S."/>
            <person name="Villarroel R."/>
            <person name="Gielen J."/>
            <person name="Ardiles W."/>
            <person name="Bents O."/>
            <person name="Lemcke K."/>
            <person name="Kolesov G."/>
            <person name="Mayer K.F.X."/>
            <person name="Rudd S."/>
            <person name="Schoof H."/>
            <person name="Schueller C."/>
            <person name="Zaccaria P."/>
            <person name="Mewes H.-W."/>
            <person name="Bevan M."/>
            <person name="Fransz P.F."/>
        </authorList>
    </citation>
    <scope>NUCLEOTIDE SEQUENCE [LARGE SCALE GENOMIC DNA]</scope>
    <source>
        <strain>cv. Columbia</strain>
    </source>
</reference>
<reference key="2">
    <citation type="journal article" date="2017" name="Plant J.">
        <title>Araport11: a complete reannotation of the Arabidopsis thaliana reference genome.</title>
        <authorList>
            <person name="Cheng C.Y."/>
            <person name="Krishnakumar V."/>
            <person name="Chan A.P."/>
            <person name="Thibaud-Nissen F."/>
            <person name="Schobel S."/>
            <person name="Town C.D."/>
        </authorList>
    </citation>
    <scope>GENOME REANNOTATION</scope>
    <source>
        <strain>cv. Columbia</strain>
    </source>
</reference>
<reference key="3">
    <citation type="journal article" date="2003" name="Science">
        <title>Empirical analysis of transcriptional activity in the Arabidopsis genome.</title>
        <authorList>
            <person name="Yamada K."/>
            <person name="Lim J."/>
            <person name="Dale J.M."/>
            <person name="Chen H."/>
            <person name="Shinn P."/>
            <person name="Palm C.J."/>
            <person name="Southwick A.M."/>
            <person name="Wu H.C."/>
            <person name="Kim C.J."/>
            <person name="Nguyen M."/>
            <person name="Pham P.K."/>
            <person name="Cheuk R.F."/>
            <person name="Karlin-Newmann G."/>
            <person name="Liu S.X."/>
            <person name="Lam B."/>
            <person name="Sakano H."/>
            <person name="Wu T."/>
            <person name="Yu G."/>
            <person name="Miranda M."/>
            <person name="Quach H.L."/>
            <person name="Tripp M."/>
            <person name="Chang C.H."/>
            <person name="Lee J.M."/>
            <person name="Toriumi M.J."/>
            <person name="Chan M.M."/>
            <person name="Tang C.C."/>
            <person name="Onodera C.S."/>
            <person name="Deng J.M."/>
            <person name="Akiyama K."/>
            <person name="Ansari Y."/>
            <person name="Arakawa T."/>
            <person name="Banh J."/>
            <person name="Banno F."/>
            <person name="Bowser L."/>
            <person name="Brooks S.Y."/>
            <person name="Carninci P."/>
            <person name="Chao Q."/>
            <person name="Choy N."/>
            <person name="Enju A."/>
            <person name="Goldsmith A.D."/>
            <person name="Gurjal M."/>
            <person name="Hansen N.F."/>
            <person name="Hayashizaki Y."/>
            <person name="Johnson-Hopson C."/>
            <person name="Hsuan V.W."/>
            <person name="Iida K."/>
            <person name="Karnes M."/>
            <person name="Khan S."/>
            <person name="Koesema E."/>
            <person name="Ishida J."/>
            <person name="Jiang P.X."/>
            <person name="Jones T."/>
            <person name="Kawai J."/>
            <person name="Kamiya A."/>
            <person name="Meyers C."/>
            <person name="Nakajima M."/>
            <person name="Narusaka M."/>
            <person name="Seki M."/>
            <person name="Sakurai T."/>
            <person name="Satou M."/>
            <person name="Tamse R."/>
            <person name="Vaysberg M."/>
            <person name="Wallender E.K."/>
            <person name="Wong C."/>
            <person name="Yamamura Y."/>
            <person name="Yuan S."/>
            <person name="Shinozaki K."/>
            <person name="Davis R.W."/>
            <person name="Theologis A."/>
            <person name="Ecker J.R."/>
        </authorList>
    </citation>
    <scope>NUCLEOTIDE SEQUENCE [LARGE SCALE MRNA]</scope>
    <source>
        <strain>cv. Columbia</strain>
    </source>
</reference>
<reference key="4">
    <citation type="submission" date="2002-03" db="EMBL/GenBank/DDBJ databases">
        <title>Full-length cDNA from Arabidopsis thaliana.</title>
        <authorList>
            <person name="Brover V.V."/>
            <person name="Troukhan M.E."/>
            <person name="Alexandrov N.A."/>
            <person name="Lu Y.-P."/>
            <person name="Flavell R.B."/>
            <person name="Feldmann K.A."/>
        </authorList>
    </citation>
    <scope>NUCLEOTIDE SEQUENCE [LARGE SCALE MRNA]</scope>
</reference>
<reference key="5">
    <citation type="book" date="2002" name="Proceedings of the 13th international conference on Arabidopsis research">
        <title>Functional analysis of SPIRAL1-LIKE genes.</title>
        <authorList>
            <person name="Nakajima K."/>
            <person name="Kawamura T."/>
            <person name="Furutani I."/>
            <person name="Hashimoto T."/>
        </authorList>
    </citation>
    <scope>GENE FAMILY</scope>
</reference>
<reference key="6">
    <citation type="journal article" date="2006" name="Plant Cell Physiol.">
        <title>Role of the SPIRAL1 gene family in anisotropic growth of Arabidopsis thaliana.</title>
        <authorList>
            <person name="Nakajima K."/>
            <person name="Kawamura T."/>
            <person name="Hashimoto T."/>
        </authorList>
    </citation>
    <scope>FUNCTION</scope>
    <scope>TISSUE SPECIFICITY</scope>
    <scope>GENE FAMILY</scope>
</reference>
<organism>
    <name type="scientific">Arabidopsis thaliana</name>
    <name type="common">Mouse-ear cress</name>
    <dbReference type="NCBI Taxonomy" id="3702"/>
    <lineage>
        <taxon>Eukaryota</taxon>
        <taxon>Viridiplantae</taxon>
        <taxon>Streptophyta</taxon>
        <taxon>Embryophyta</taxon>
        <taxon>Tracheophyta</taxon>
        <taxon>Spermatophyta</taxon>
        <taxon>Magnoliopsida</taxon>
        <taxon>eudicotyledons</taxon>
        <taxon>Gunneridae</taxon>
        <taxon>Pentapetalae</taxon>
        <taxon>rosids</taxon>
        <taxon>malvids</taxon>
        <taxon>Brassicales</taxon>
        <taxon>Brassicaceae</taxon>
        <taxon>Camelineae</taxon>
        <taxon>Arabidopsis</taxon>
    </lineage>
</organism>
<proteinExistence type="evidence at transcript level"/>
<comment type="function">
    <text evidence="3">Acts redundantly with SPR1 in maintaining the cortical microtubules organization essential for anisotropic cell growth.</text>
</comment>
<comment type="tissue specificity">
    <text evidence="3">Ubiquitous.</text>
</comment>
<comment type="similarity">
    <text evidence="4">Belongs to the SPIRAL1 family.</text>
</comment>
<keyword id="KW-0493">Microtubule</keyword>
<keyword id="KW-0597">Phosphoprotein</keyword>
<keyword id="KW-1185">Reference proteome</keyword>
<protein>
    <recommendedName>
        <fullName>Protein SPIRAL1-like 4</fullName>
    </recommendedName>
</protein>
<accession>Q9LF22</accession>
<accession>Q8LBJ3</accession>
<sequence>MGKARGVNSGGGESSLGYLFGSGESVPKPNKPNAKTGFTTTTTTTTTTDGAGGRPKTTTTTTTTGDKNKTEENSAGVRGSPNNYYRSDGQNCGNFLTERPSTKVHAAPGGGSSLGYLFGSGPCGSDK</sequence>
<feature type="chain" id="PRO_0000417956" description="Protein SPIRAL1-like 4">
    <location>
        <begin position="1"/>
        <end position="127"/>
    </location>
</feature>
<feature type="region of interest" description="Disordered" evidence="2">
    <location>
        <begin position="1"/>
        <end position="127"/>
    </location>
</feature>
<feature type="compositionally biased region" description="Low complexity" evidence="2">
    <location>
        <begin position="39"/>
        <end position="48"/>
    </location>
</feature>
<feature type="compositionally biased region" description="Polar residues" evidence="2">
    <location>
        <begin position="80"/>
        <end position="94"/>
    </location>
</feature>
<feature type="modified residue" description="Phosphoserine" evidence="1">
    <location>
        <position position="80"/>
    </location>
</feature>
<feature type="sequence conflict" description="In Ref. 4; AAM64731." evidence="4" ref="4">
    <original>N</original>
    <variation>K</variation>
    <location>
        <position position="33"/>
    </location>
</feature>
<dbReference type="EMBL" id="AL391143">
    <property type="protein sequence ID" value="CAC01759.1"/>
    <property type="molecule type" value="Genomic_DNA"/>
</dbReference>
<dbReference type="EMBL" id="CP002688">
    <property type="protein sequence ID" value="AED92182.1"/>
    <property type="molecule type" value="Genomic_DNA"/>
</dbReference>
<dbReference type="EMBL" id="CP002688">
    <property type="protein sequence ID" value="ANM68530.1"/>
    <property type="molecule type" value="Genomic_DNA"/>
</dbReference>
<dbReference type="EMBL" id="BT004163">
    <property type="protein sequence ID" value="AAO42183.1"/>
    <property type="molecule type" value="mRNA"/>
</dbReference>
<dbReference type="EMBL" id="BT005051">
    <property type="protein sequence ID" value="AAO50584.1"/>
    <property type="molecule type" value="mRNA"/>
</dbReference>
<dbReference type="EMBL" id="AY087175">
    <property type="protein sequence ID" value="AAM64731.1"/>
    <property type="molecule type" value="mRNA"/>
</dbReference>
<dbReference type="PIR" id="T51538">
    <property type="entry name" value="T51538"/>
</dbReference>
<dbReference type="RefSeq" id="NP_001330276.1">
    <property type="nucleotide sequence ID" value="NM_001343410.1"/>
</dbReference>
<dbReference type="RefSeq" id="NP_197064.1">
    <property type="nucleotide sequence ID" value="NM_121564.3"/>
</dbReference>
<dbReference type="BioGRID" id="16688">
    <property type="interactions" value="2"/>
</dbReference>
<dbReference type="IntAct" id="Q9LF22">
    <property type="interactions" value="2"/>
</dbReference>
<dbReference type="STRING" id="3702.Q9LF22"/>
<dbReference type="iPTMnet" id="Q9LF22"/>
<dbReference type="PaxDb" id="3702-AT5G15600.1"/>
<dbReference type="ProteomicsDB" id="232613"/>
<dbReference type="EnsemblPlants" id="AT5G15600.1">
    <property type="protein sequence ID" value="AT5G15600.1"/>
    <property type="gene ID" value="AT5G15600"/>
</dbReference>
<dbReference type="EnsemblPlants" id="AT5G15600.2">
    <property type="protein sequence ID" value="AT5G15600.2"/>
    <property type="gene ID" value="AT5G15600"/>
</dbReference>
<dbReference type="GeneID" id="831412"/>
<dbReference type="Gramene" id="AT5G15600.1">
    <property type="protein sequence ID" value="AT5G15600.1"/>
    <property type="gene ID" value="AT5G15600"/>
</dbReference>
<dbReference type="Gramene" id="AT5G15600.2">
    <property type="protein sequence ID" value="AT5G15600.2"/>
    <property type="gene ID" value="AT5G15600"/>
</dbReference>
<dbReference type="KEGG" id="ath:AT5G15600"/>
<dbReference type="Araport" id="AT5G15600"/>
<dbReference type="TAIR" id="AT5G15600">
    <property type="gene designation" value="SP1L4"/>
</dbReference>
<dbReference type="HOGENOM" id="CLU_129558_0_0_1"/>
<dbReference type="InParanoid" id="Q9LF22"/>
<dbReference type="PhylomeDB" id="Q9LF22"/>
<dbReference type="PRO" id="PR:Q9LF22"/>
<dbReference type="Proteomes" id="UP000006548">
    <property type="component" value="Chromosome 5"/>
</dbReference>
<dbReference type="ExpressionAtlas" id="Q9LF22">
    <property type="expression patterns" value="baseline and differential"/>
</dbReference>
<dbReference type="GO" id="GO:0005874">
    <property type="term" value="C:microtubule"/>
    <property type="evidence" value="ECO:0007669"/>
    <property type="project" value="UniProtKB-KW"/>
</dbReference>
<dbReference type="GO" id="GO:0043622">
    <property type="term" value="P:cortical microtubule organization"/>
    <property type="evidence" value="ECO:0007669"/>
    <property type="project" value="InterPro"/>
</dbReference>
<dbReference type="InterPro" id="IPR039613">
    <property type="entry name" value="SPR1/2/3/4/5"/>
</dbReference>
<dbReference type="PANTHER" id="PTHR33403:SF17">
    <property type="entry name" value="PROTEIN SPIRAL1-LIKE 4"/>
    <property type="match status" value="1"/>
</dbReference>
<dbReference type="PANTHER" id="PTHR33403">
    <property type="entry name" value="SPR1"/>
    <property type="match status" value="1"/>
</dbReference>
<name>SP1L4_ARATH</name>
<gene>
    <name type="primary">SP1L4</name>
    <name type="ordered locus">At5g15600</name>
    <name type="ORF">T20K14_210</name>
</gene>